<keyword id="KW-0378">Hydrolase</keyword>
<keyword id="KW-0460">Magnesium</keyword>
<name>DGTP_SALPK</name>
<comment type="function">
    <text evidence="1">dGTPase preferentially hydrolyzes dGTP over the other canonical NTPs.</text>
</comment>
<comment type="catalytic activity">
    <reaction evidence="1">
        <text>dGTP + H2O = 2'-deoxyguanosine + triphosphate + H(+)</text>
        <dbReference type="Rhea" id="RHEA:15193"/>
        <dbReference type="ChEBI" id="CHEBI:15377"/>
        <dbReference type="ChEBI" id="CHEBI:15378"/>
        <dbReference type="ChEBI" id="CHEBI:17172"/>
        <dbReference type="ChEBI" id="CHEBI:18036"/>
        <dbReference type="ChEBI" id="CHEBI:61429"/>
        <dbReference type="EC" id="3.1.5.1"/>
    </reaction>
</comment>
<comment type="cofactor">
    <cofactor evidence="1">
        <name>Mg(2+)</name>
        <dbReference type="ChEBI" id="CHEBI:18420"/>
    </cofactor>
</comment>
<comment type="subunit">
    <text evidence="1">Homotetramer.</text>
</comment>
<comment type="similarity">
    <text evidence="1">Belongs to the dGTPase family. Type 1 subfamily.</text>
</comment>
<feature type="chain" id="PRO_1000090264" description="Deoxyguanosinetriphosphate triphosphohydrolase">
    <location>
        <begin position="1"/>
        <end position="505"/>
    </location>
</feature>
<feature type="domain" description="HD" evidence="2">
    <location>
        <begin position="66"/>
        <end position="273"/>
    </location>
</feature>
<proteinExistence type="inferred from homology"/>
<protein>
    <recommendedName>
        <fullName evidence="1">Deoxyguanosinetriphosphate triphosphohydrolase</fullName>
        <shortName evidence="1">dGTP triphosphohydrolase</shortName>
        <shortName evidence="1">dGTPase</shortName>
        <ecNumber evidence="1">3.1.5.1</ecNumber>
    </recommendedName>
</protein>
<organism>
    <name type="scientific">Salmonella paratyphi A (strain AKU_12601)</name>
    <dbReference type="NCBI Taxonomy" id="554290"/>
    <lineage>
        <taxon>Bacteria</taxon>
        <taxon>Pseudomonadati</taxon>
        <taxon>Pseudomonadota</taxon>
        <taxon>Gammaproteobacteria</taxon>
        <taxon>Enterobacterales</taxon>
        <taxon>Enterobacteriaceae</taxon>
        <taxon>Salmonella</taxon>
    </lineage>
</organism>
<dbReference type="EC" id="3.1.5.1" evidence="1"/>
<dbReference type="EMBL" id="FM200053">
    <property type="protein sequence ID" value="CAR58321.1"/>
    <property type="molecule type" value="Genomic_DNA"/>
</dbReference>
<dbReference type="RefSeq" id="WP_000146453.1">
    <property type="nucleotide sequence ID" value="NC_011147.1"/>
</dbReference>
<dbReference type="SMR" id="B5BL88"/>
<dbReference type="KEGG" id="sek:SSPA0207"/>
<dbReference type="HOGENOM" id="CLU_028163_2_1_6"/>
<dbReference type="Proteomes" id="UP000001869">
    <property type="component" value="Chromosome"/>
</dbReference>
<dbReference type="GO" id="GO:0008832">
    <property type="term" value="F:dGTPase activity"/>
    <property type="evidence" value="ECO:0007669"/>
    <property type="project" value="UniProtKB-UniRule"/>
</dbReference>
<dbReference type="GO" id="GO:0000287">
    <property type="term" value="F:magnesium ion binding"/>
    <property type="evidence" value="ECO:0007669"/>
    <property type="project" value="UniProtKB-UniRule"/>
</dbReference>
<dbReference type="GO" id="GO:0006203">
    <property type="term" value="P:dGTP catabolic process"/>
    <property type="evidence" value="ECO:0007669"/>
    <property type="project" value="InterPro"/>
</dbReference>
<dbReference type="CDD" id="cd00077">
    <property type="entry name" value="HDc"/>
    <property type="match status" value="1"/>
</dbReference>
<dbReference type="FunFam" id="1.10.3210.10:FF:000009">
    <property type="entry name" value="Deoxyguanosinetriphosphate triphosphohydrolase"/>
    <property type="match status" value="1"/>
</dbReference>
<dbReference type="FunFam" id="1.10.3210.10:FF:000010">
    <property type="entry name" value="Deoxyguanosinetriphosphate triphosphohydrolase"/>
    <property type="match status" value="1"/>
</dbReference>
<dbReference type="FunFam" id="1.10.3410.10:FF:000001">
    <property type="entry name" value="Deoxyguanosinetriphosphate triphosphohydrolase"/>
    <property type="match status" value="1"/>
</dbReference>
<dbReference type="Gene3D" id="1.10.3210.10">
    <property type="entry name" value="Hypothetical protein af1432"/>
    <property type="match status" value="3"/>
</dbReference>
<dbReference type="Gene3D" id="1.10.3410.10">
    <property type="entry name" value="putative deoxyguanosinetriphosphate triphosphohydrolase like domain"/>
    <property type="match status" value="1"/>
</dbReference>
<dbReference type="HAMAP" id="MF_00030">
    <property type="entry name" value="dGTPase_type1"/>
    <property type="match status" value="1"/>
</dbReference>
<dbReference type="InterPro" id="IPR023293">
    <property type="entry name" value="dGTP_triP_hydro_central_sf"/>
</dbReference>
<dbReference type="InterPro" id="IPR006261">
    <property type="entry name" value="dGTPase"/>
</dbReference>
<dbReference type="InterPro" id="IPR050135">
    <property type="entry name" value="dGTPase-like"/>
</dbReference>
<dbReference type="InterPro" id="IPR020779">
    <property type="entry name" value="dNTPase_1"/>
</dbReference>
<dbReference type="InterPro" id="IPR003607">
    <property type="entry name" value="HD/PDEase_dom"/>
</dbReference>
<dbReference type="InterPro" id="IPR006674">
    <property type="entry name" value="HD_domain"/>
</dbReference>
<dbReference type="NCBIfam" id="TIGR01353">
    <property type="entry name" value="dGTP_triPase"/>
    <property type="match status" value="1"/>
</dbReference>
<dbReference type="NCBIfam" id="NF003429">
    <property type="entry name" value="PRK04926.1"/>
    <property type="match status" value="1"/>
</dbReference>
<dbReference type="PANTHER" id="PTHR11373:SF32">
    <property type="entry name" value="DEOXYGUANOSINETRIPHOSPHATE TRIPHOSPHOHYDROLASE"/>
    <property type="match status" value="1"/>
</dbReference>
<dbReference type="PANTHER" id="PTHR11373">
    <property type="entry name" value="DEOXYNUCLEOSIDE TRIPHOSPHATE TRIPHOSPHOHYDROLASE"/>
    <property type="match status" value="1"/>
</dbReference>
<dbReference type="Pfam" id="PF01966">
    <property type="entry name" value="HD"/>
    <property type="match status" value="1"/>
</dbReference>
<dbReference type="SMART" id="SM00471">
    <property type="entry name" value="HDc"/>
    <property type="match status" value="1"/>
</dbReference>
<dbReference type="SUPFAM" id="SSF109604">
    <property type="entry name" value="HD-domain/PDEase-like"/>
    <property type="match status" value="1"/>
</dbReference>
<dbReference type="PROSITE" id="PS51831">
    <property type="entry name" value="HD"/>
    <property type="match status" value="1"/>
</dbReference>
<accession>B5BL88</accession>
<evidence type="ECO:0000255" key="1">
    <source>
        <dbReference type="HAMAP-Rule" id="MF_00030"/>
    </source>
</evidence>
<evidence type="ECO:0000255" key="2">
    <source>
        <dbReference type="PROSITE-ProRule" id="PRU01175"/>
    </source>
</evidence>
<gene>
    <name evidence="1" type="primary">dgt</name>
    <name type="ordered locus">SSPA0207</name>
</gene>
<sequence length="505" mass="59509">MASIDFRNKINWHRRYRSPQGVKTEHEILRIFESDRGRIINSPAIRRLQQKTQVFPLERNAAVRTRLTHSMEVQQVGRYIAKEILSRLKEQNRLEEYGLDALTGPFESIVEMACLMHDIGNPPFGHFGEAAINDWFRQWLHPEDAESQPLTHDRCVVSSLRLQEGEENLNDIRRKVRQDICHFEGNAQGIRLVHTLMRMNLTWAQVGGILKYTRPAWWRGPVPDSHRYLMKKPGYYLSEEKYIARLRKELQLAPYSRFPLTWIMEAADDISYCVADLEDAVEKRIFSVEQLYHHLYHAWGHHEKDSLFELVVGNAWEKSRANTLSRSTEDQFFMYLRVNTLNKLVSYAAQRFIDNLPQIFAGTFNQALLEDASGFSRLLELYKNVAVEHVFSHPDVEQLELQGYRVISGLLDIYQPLLSLSLNDFRELVEKERLKRFPIESRLFQKLSTRHRLAYVEVVSKLPTDSAEYPVLEYYYRCRLIQDYISGMTDLYAWDEYRRLMAVEQ</sequence>
<reference key="1">
    <citation type="journal article" date="2009" name="BMC Genomics">
        <title>Pseudogene accumulation in the evolutionary histories of Salmonella enterica serovars Paratyphi A and Typhi.</title>
        <authorList>
            <person name="Holt K.E."/>
            <person name="Thomson N.R."/>
            <person name="Wain J."/>
            <person name="Langridge G.C."/>
            <person name="Hasan R."/>
            <person name="Bhutta Z.A."/>
            <person name="Quail M.A."/>
            <person name="Norbertczak H."/>
            <person name="Walker D."/>
            <person name="Simmonds M."/>
            <person name="White B."/>
            <person name="Bason N."/>
            <person name="Mungall K."/>
            <person name="Dougan G."/>
            <person name="Parkhill J."/>
        </authorList>
    </citation>
    <scope>NUCLEOTIDE SEQUENCE [LARGE SCALE GENOMIC DNA]</scope>
    <source>
        <strain>AKU_12601</strain>
    </source>
</reference>